<comment type="function">
    <text evidence="1">Regulatory subunit of a potassium efflux system that confers protection against electrophiles. Required for full activity of KefB.</text>
</comment>
<comment type="catalytic activity">
    <reaction evidence="1">
        <text>a quinone + NADH + H(+) = a quinol + NAD(+)</text>
        <dbReference type="Rhea" id="RHEA:46160"/>
        <dbReference type="ChEBI" id="CHEBI:15378"/>
        <dbReference type="ChEBI" id="CHEBI:24646"/>
        <dbReference type="ChEBI" id="CHEBI:57540"/>
        <dbReference type="ChEBI" id="CHEBI:57945"/>
        <dbReference type="ChEBI" id="CHEBI:132124"/>
        <dbReference type="EC" id="1.6.5.2"/>
    </reaction>
</comment>
<comment type="catalytic activity">
    <reaction evidence="1">
        <text>a quinone + NADPH + H(+) = a quinol + NADP(+)</text>
        <dbReference type="Rhea" id="RHEA:46164"/>
        <dbReference type="ChEBI" id="CHEBI:15378"/>
        <dbReference type="ChEBI" id="CHEBI:24646"/>
        <dbReference type="ChEBI" id="CHEBI:57783"/>
        <dbReference type="ChEBI" id="CHEBI:58349"/>
        <dbReference type="ChEBI" id="CHEBI:132124"/>
        <dbReference type="EC" id="1.6.5.2"/>
    </reaction>
</comment>
<comment type="subunit">
    <text evidence="1">Interacts with KefB.</text>
</comment>
<comment type="subcellular location">
    <subcellularLocation>
        <location evidence="1">Cell inner membrane</location>
        <topology evidence="1">Peripheral membrane protein</topology>
        <orientation evidence="1">Cytoplasmic side</orientation>
    </subcellularLocation>
</comment>
<comment type="similarity">
    <text evidence="1">Belongs to the NAD(P)H dehydrogenase (quinone) family. KefG subfamily.</text>
</comment>
<gene>
    <name evidence="1" type="primary">kefG</name>
    <name type="ordered locus">SEN3286</name>
</gene>
<sequence length="183" mass="20927">MSQPAKVLLLYAHPESQDSVANRVLLKPAIQHNNVTVHDLYARYPDFFIDTPYEQALLREHDVIVFQHPLYTYSCPALLKEWLDRVLSRGFASGPGGNQLVGKYWRSVITTGEPESAYRYDALNRYPMSDVLRPFELTAAMCRMHWMPPIIVYWARRQSPQTLASHAKAYGEWLANPVSAGGY</sequence>
<organism>
    <name type="scientific">Salmonella enteritidis PT4 (strain P125109)</name>
    <dbReference type="NCBI Taxonomy" id="550537"/>
    <lineage>
        <taxon>Bacteria</taxon>
        <taxon>Pseudomonadati</taxon>
        <taxon>Pseudomonadota</taxon>
        <taxon>Gammaproteobacteria</taxon>
        <taxon>Enterobacterales</taxon>
        <taxon>Enterobacteriaceae</taxon>
        <taxon>Salmonella</taxon>
    </lineage>
</organism>
<proteinExistence type="inferred from homology"/>
<protein>
    <recommendedName>
        <fullName evidence="1">Glutathione-regulated potassium-efflux system ancillary protein KefG</fullName>
    </recommendedName>
    <alternativeName>
        <fullName evidence="1">Putative quinone oxidoreductase KefG</fullName>
        <ecNumber evidence="1">1.6.5.2</ecNumber>
    </alternativeName>
</protein>
<name>KEFG_SALEP</name>
<evidence type="ECO:0000255" key="1">
    <source>
        <dbReference type="HAMAP-Rule" id="MF_01415"/>
    </source>
</evidence>
<dbReference type="EC" id="1.6.5.2" evidence="1"/>
<dbReference type="EMBL" id="AM933172">
    <property type="protein sequence ID" value="CAR34861.1"/>
    <property type="molecule type" value="Genomic_DNA"/>
</dbReference>
<dbReference type="RefSeq" id="WP_000081820.1">
    <property type="nucleotide sequence ID" value="NC_011294.1"/>
</dbReference>
<dbReference type="SMR" id="B5R2A9"/>
<dbReference type="KEGG" id="set:SEN3286"/>
<dbReference type="HOGENOM" id="CLU_058643_0_1_6"/>
<dbReference type="Proteomes" id="UP000000613">
    <property type="component" value="Chromosome"/>
</dbReference>
<dbReference type="GO" id="GO:0005886">
    <property type="term" value="C:plasma membrane"/>
    <property type="evidence" value="ECO:0007669"/>
    <property type="project" value="UniProtKB-SubCell"/>
</dbReference>
<dbReference type="GO" id="GO:0009055">
    <property type="term" value="F:electron transfer activity"/>
    <property type="evidence" value="ECO:0007669"/>
    <property type="project" value="TreeGrafter"/>
</dbReference>
<dbReference type="GO" id="GO:0010181">
    <property type="term" value="F:FMN binding"/>
    <property type="evidence" value="ECO:0007669"/>
    <property type="project" value="TreeGrafter"/>
</dbReference>
<dbReference type="GO" id="GO:0050136">
    <property type="term" value="F:NADH:ubiquinone reductase (non-electrogenic) activity"/>
    <property type="evidence" value="ECO:0007669"/>
    <property type="project" value="RHEA"/>
</dbReference>
<dbReference type="GO" id="GO:0008753">
    <property type="term" value="F:NADPH dehydrogenase (quinone) activity"/>
    <property type="evidence" value="ECO:0007669"/>
    <property type="project" value="RHEA"/>
</dbReference>
<dbReference type="GO" id="GO:1901381">
    <property type="term" value="P:positive regulation of potassium ion transmembrane transport"/>
    <property type="evidence" value="ECO:0007669"/>
    <property type="project" value="UniProtKB-UniRule"/>
</dbReference>
<dbReference type="GO" id="GO:0006813">
    <property type="term" value="P:potassium ion transport"/>
    <property type="evidence" value="ECO:0007669"/>
    <property type="project" value="InterPro"/>
</dbReference>
<dbReference type="FunFam" id="3.40.50.360:FF:000013">
    <property type="entry name" value="Glutathione-regulated potassium-efflux system ancillary protein KefG"/>
    <property type="match status" value="1"/>
</dbReference>
<dbReference type="Gene3D" id="3.40.50.360">
    <property type="match status" value="1"/>
</dbReference>
<dbReference type="HAMAP" id="MF_01415">
    <property type="entry name" value="K_H_efflux_KefG"/>
    <property type="match status" value="1"/>
</dbReference>
<dbReference type="InterPro" id="IPR003680">
    <property type="entry name" value="Flavodoxin_fold"/>
</dbReference>
<dbReference type="InterPro" id="IPR029039">
    <property type="entry name" value="Flavoprotein-like_sf"/>
</dbReference>
<dbReference type="InterPro" id="IPR023947">
    <property type="entry name" value="K_H_efflux_KefG"/>
</dbReference>
<dbReference type="InterPro" id="IPR046980">
    <property type="entry name" value="KefG/KefF"/>
</dbReference>
<dbReference type="NCBIfam" id="NF003430">
    <property type="entry name" value="PRK04930.1"/>
    <property type="match status" value="1"/>
</dbReference>
<dbReference type="PANTHER" id="PTHR47307">
    <property type="entry name" value="GLUTATHIONE-REGULATED POTASSIUM-EFFLUX SYSTEM ANCILLARY PROTEIN KEFG"/>
    <property type="match status" value="1"/>
</dbReference>
<dbReference type="PANTHER" id="PTHR47307:SF1">
    <property type="entry name" value="GLUTATHIONE-REGULATED POTASSIUM-EFFLUX SYSTEM ANCILLARY PROTEIN KEFG"/>
    <property type="match status" value="1"/>
</dbReference>
<dbReference type="Pfam" id="PF02525">
    <property type="entry name" value="Flavodoxin_2"/>
    <property type="match status" value="1"/>
</dbReference>
<dbReference type="SUPFAM" id="SSF52218">
    <property type="entry name" value="Flavoproteins"/>
    <property type="match status" value="1"/>
</dbReference>
<keyword id="KW-0997">Cell inner membrane</keyword>
<keyword id="KW-1003">Cell membrane</keyword>
<keyword id="KW-0472">Membrane</keyword>
<keyword id="KW-0520">NAD</keyword>
<keyword id="KW-0560">Oxidoreductase</keyword>
<feature type="chain" id="PRO_1000145583" description="Glutathione-regulated potassium-efflux system ancillary protein KefG">
    <location>
        <begin position="1"/>
        <end position="183"/>
    </location>
</feature>
<reference key="1">
    <citation type="journal article" date="2008" name="Genome Res.">
        <title>Comparative genome analysis of Salmonella enteritidis PT4 and Salmonella gallinarum 287/91 provides insights into evolutionary and host adaptation pathways.</title>
        <authorList>
            <person name="Thomson N.R."/>
            <person name="Clayton D.J."/>
            <person name="Windhorst D."/>
            <person name="Vernikos G."/>
            <person name="Davidson S."/>
            <person name="Churcher C."/>
            <person name="Quail M.A."/>
            <person name="Stevens M."/>
            <person name="Jones M.A."/>
            <person name="Watson M."/>
            <person name="Barron A."/>
            <person name="Layton A."/>
            <person name="Pickard D."/>
            <person name="Kingsley R.A."/>
            <person name="Bignell A."/>
            <person name="Clark L."/>
            <person name="Harris B."/>
            <person name="Ormond D."/>
            <person name="Abdellah Z."/>
            <person name="Brooks K."/>
            <person name="Cherevach I."/>
            <person name="Chillingworth T."/>
            <person name="Woodward J."/>
            <person name="Norberczak H."/>
            <person name="Lord A."/>
            <person name="Arrowsmith C."/>
            <person name="Jagels K."/>
            <person name="Moule S."/>
            <person name="Mungall K."/>
            <person name="Saunders M."/>
            <person name="Whitehead S."/>
            <person name="Chabalgoity J.A."/>
            <person name="Maskell D."/>
            <person name="Humphreys T."/>
            <person name="Roberts M."/>
            <person name="Barrow P.A."/>
            <person name="Dougan G."/>
            <person name="Parkhill J."/>
        </authorList>
    </citation>
    <scope>NUCLEOTIDE SEQUENCE [LARGE SCALE GENOMIC DNA]</scope>
    <source>
        <strain>P125109</strain>
    </source>
</reference>
<accession>B5R2A9</accession>